<feature type="chain" id="PRO_0000153317" description="Histidinol-phosphate aminotransferase">
    <location>
        <begin position="1"/>
        <end position="356"/>
    </location>
</feature>
<feature type="modified residue" description="N6-(pyridoxal phosphate)lysine" evidence="1">
    <location>
        <position position="211"/>
    </location>
</feature>
<reference key="1">
    <citation type="journal article" date="2003" name="Proc. Natl. Acad. Sci. U.S.A.">
        <title>The genome sequence of Blochmannia floridanus: comparative analysis of reduced genomes.</title>
        <authorList>
            <person name="Gil R."/>
            <person name="Silva F.J."/>
            <person name="Zientz E."/>
            <person name="Delmotte F."/>
            <person name="Gonzalez-Candelas F."/>
            <person name="Latorre A."/>
            <person name="Rausell C."/>
            <person name="Kamerbeek J."/>
            <person name="Gadau J."/>
            <person name="Hoelldobler B."/>
            <person name="van Ham R.C.H.J."/>
            <person name="Gross R."/>
            <person name="Moya A."/>
        </authorList>
    </citation>
    <scope>NUCLEOTIDE SEQUENCE [LARGE SCALE GENOMIC DNA]</scope>
</reference>
<comment type="catalytic activity">
    <reaction evidence="1">
        <text>L-histidinol phosphate + 2-oxoglutarate = 3-(imidazol-4-yl)-2-oxopropyl phosphate + L-glutamate</text>
        <dbReference type="Rhea" id="RHEA:23744"/>
        <dbReference type="ChEBI" id="CHEBI:16810"/>
        <dbReference type="ChEBI" id="CHEBI:29985"/>
        <dbReference type="ChEBI" id="CHEBI:57766"/>
        <dbReference type="ChEBI" id="CHEBI:57980"/>
        <dbReference type="EC" id="2.6.1.9"/>
    </reaction>
</comment>
<comment type="cofactor">
    <cofactor evidence="1">
        <name>pyridoxal 5'-phosphate</name>
        <dbReference type="ChEBI" id="CHEBI:597326"/>
    </cofactor>
</comment>
<comment type="pathway">
    <text evidence="1">Amino-acid biosynthesis; L-histidine biosynthesis; L-histidine from 5-phospho-alpha-D-ribose 1-diphosphate: step 7/9.</text>
</comment>
<comment type="subunit">
    <text evidence="1">Homodimer.</text>
</comment>
<comment type="similarity">
    <text evidence="1">Belongs to the class-II pyridoxal-phosphate-dependent aminotransferase family. Histidinol-phosphate aminotransferase subfamily.</text>
</comment>
<accession>Q7VQW9</accession>
<name>HIS8_BLOFL</name>
<sequence>MNFNYLIKNNILNLKPYQSARRLKHSGKIWLNANEYPIAPYYKGQYKNINRYPECQPPELINNYAAYSGVQSDHILVSRGADESIELLMKVFCRPNKDFIIFCPPTYGMYKTNAEILEIYYRMIPTKKNWQLDLSSIQSQLNNVKLIYICNPNNPTGNIIYLHSLKKLLKIIQNKALLVCDEAYIDFCRHASLIQLLTEYPNLIILRTLSKAFALAGLRCGFTLANPKIINLLTKVITPYPIPTPVIDIATQALTPQNIQYTQTRIKKIHNNRNMLIKALKQCSCVQQIFPSYTNYILVKFYPQYQVFKTLLNQGIVLRDQSYQPGLMHCLRITIGSYNECQLVISTLKKLKHSTF</sequence>
<dbReference type="EC" id="2.6.1.9" evidence="1"/>
<dbReference type="EMBL" id="BX248583">
    <property type="protein sequence ID" value="CAD83523.1"/>
    <property type="molecule type" value="Genomic_DNA"/>
</dbReference>
<dbReference type="SMR" id="Q7VQW9"/>
<dbReference type="STRING" id="203907.Bfl464"/>
<dbReference type="KEGG" id="bfl:Bfl464"/>
<dbReference type="eggNOG" id="COG0079">
    <property type="taxonomic scope" value="Bacteria"/>
</dbReference>
<dbReference type="HOGENOM" id="CLU_017584_3_1_6"/>
<dbReference type="OrthoDB" id="9813612at2"/>
<dbReference type="UniPathway" id="UPA00031">
    <property type="reaction ID" value="UER00012"/>
</dbReference>
<dbReference type="Proteomes" id="UP000002192">
    <property type="component" value="Chromosome"/>
</dbReference>
<dbReference type="GO" id="GO:0004400">
    <property type="term" value="F:histidinol-phosphate transaminase activity"/>
    <property type="evidence" value="ECO:0007669"/>
    <property type="project" value="UniProtKB-UniRule"/>
</dbReference>
<dbReference type="GO" id="GO:0030170">
    <property type="term" value="F:pyridoxal phosphate binding"/>
    <property type="evidence" value="ECO:0007669"/>
    <property type="project" value="InterPro"/>
</dbReference>
<dbReference type="GO" id="GO:0000105">
    <property type="term" value="P:L-histidine biosynthetic process"/>
    <property type="evidence" value="ECO:0007669"/>
    <property type="project" value="UniProtKB-UniRule"/>
</dbReference>
<dbReference type="CDD" id="cd00609">
    <property type="entry name" value="AAT_like"/>
    <property type="match status" value="1"/>
</dbReference>
<dbReference type="Gene3D" id="3.90.1150.10">
    <property type="entry name" value="Aspartate Aminotransferase, domain 1"/>
    <property type="match status" value="1"/>
</dbReference>
<dbReference type="Gene3D" id="3.40.640.10">
    <property type="entry name" value="Type I PLP-dependent aspartate aminotransferase-like (Major domain)"/>
    <property type="match status" value="1"/>
</dbReference>
<dbReference type="HAMAP" id="MF_01023">
    <property type="entry name" value="HisC_aminotrans_2"/>
    <property type="match status" value="1"/>
</dbReference>
<dbReference type="InterPro" id="IPR001917">
    <property type="entry name" value="Aminotrans_II_pyridoxalP_BS"/>
</dbReference>
<dbReference type="InterPro" id="IPR004839">
    <property type="entry name" value="Aminotransferase_I/II_large"/>
</dbReference>
<dbReference type="InterPro" id="IPR005861">
    <property type="entry name" value="HisP_aminotrans"/>
</dbReference>
<dbReference type="InterPro" id="IPR015424">
    <property type="entry name" value="PyrdxlP-dep_Trfase"/>
</dbReference>
<dbReference type="InterPro" id="IPR015421">
    <property type="entry name" value="PyrdxlP-dep_Trfase_major"/>
</dbReference>
<dbReference type="InterPro" id="IPR015422">
    <property type="entry name" value="PyrdxlP-dep_Trfase_small"/>
</dbReference>
<dbReference type="NCBIfam" id="TIGR01141">
    <property type="entry name" value="hisC"/>
    <property type="match status" value="1"/>
</dbReference>
<dbReference type="PANTHER" id="PTHR42885:SF2">
    <property type="entry name" value="HISTIDINOL-PHOSPHATE AMINOTRANSFERASE"/>
    <property type="match status" value="1"/>
</dbReference>
<dbReference type="PANTHER" id="PTHR42885">
    <property type="entry name" value="HISTIDINOL-PHOSPHATE AMINOTRANSFERASE-RELATED"/>
    <property type="match status" value="1"/>
</dbReference>
<dbReference type="Pfam" id="PF00155">
    <property type="entry name" value="Aminotran_1_2"/>
    <property type="match status" value="1"/>
</dbReference>
<dbReference type="SUPFAM" id="SSF53383">
    <property type="entry name" value="PLP-dependent transferases"/>
    <property type="match status" value="1"/>
</dbReference>
<dbReference type="PROSITE" id="PS00599">
    <property type="entry name" value="AA_TRANSFER_CLASS_2"/>
    <property type="match status" value="1"/>
</dbReference>
<keyword id="KW-0028">Amino-acid biosynthesis</keyword>
<keyword id="KW-0032">Aminotransferase</keyword>
<keyword id="KW-0368">Histidine biosynthesis</keyword>
<keyword id="KW-0663">Pyridoxal phosphate</keyword>
<keyword id="KW-1185">Reference proteome</keyword>
<keyword id="KW-0808">Transferase</keyword>
<organism>
    <name type="scientific">Blochmanniella floridana</name>
    <dbReference type="NCBI Taxonomy" id="203907"/>
    <lineage>
        <taxon>Bacteria</taxon>
        <taxon>Pseudomonadati</taxon>
        <taxon>Pseudomonadota</taxon>
        <taxon>Gammaproteobacteria</taxon>
        <taxon>Enterobacterales</taxon>
        <taxon>Enterobacteriaceae</taxon>
        <taxon>ant endosymbionts</taxon>
        <taxon>Candidatus Blochmanniella</taxon>
    </lineage>
</organism>
<protein>
    <recommendedName>
        <fullName evidence="1">Histidinol-phosphate aminotransferase</fullName>
        <ecNumber evidence="1">2.6.1.9</ecNumber>
    </recommendedName>
    <alternativeName>
        <fullName evidence="1">Imidazole acetol-phosphate transaminase</fullName>
    </alternativeName>
</protein>
<gene>
    <name evidence="1" type="primary">hisC</name>
    <name type="ordered locus">Bfl464</name>
</gene>
<evidence type="ECO:0000255" key="1">
    <source>
        <dbReference type="HAMAP-Rule" id="MF_01023"/>
    </source>
</evidence>
<proteinExistence type="inferred from homology"/>